<evidence type="ECO:0000255" key="1"/>
<evidence type="ECO:0000256" key="2">
    <source>
        <dbReference type="SAM" id="MobiDB-lite"/>
    </source>
</evidence>
<evidence type="ECO:0000269" key="3">
    <source>
    </source>
</evidence>
<evidence type="ECO:0000269" key="4">
    <source>
    </source>
</evidence>
<evidence type="ECO:0000269" key="5">
    <source>
    </source>
</evidence>
<evidence type="ECO:0000305" key="6"/>
<organism>
    <name type="scientific">Mus musculus</name>
    <name type="common">Mouse</name>
    <dbReference type="NCBI Taxonomy" id="10090"/>
    <lineage>
        <taxon>Eukaryota</taxon>
        <taxon>Metazoa</taxon>
        <taxon>Chordata</taxon>
        <taxon>Craniata</taxon>
        <taxon>Vertebrata</taxon>
        <taxon>Euteleostomi</taxon>
        <taxon>Mammalia</taxon>
        <taxon>Eutheria</taxon>
        <taxon>Euarchontoglires</taxon>
        <taxon>Glires</taxon>
        <taxon>Rodentia</taxon>
        <taxon>Myomorpha</taxon>
        <taxon>Muroidea</taxon>
        <taxon>Muridae</taxon>
        <taxon>Murinae</taxon>
        <taxon>Mus</taxon>
        <taxon>Mus</taxon>
    </lineage>
</organism>
<proteinExistence type="evidence at protein level"/>
<name>E2F3_MOUSE</name>
<feature type="chain" id="PRO_0000219467" description="Transcription factor E2F3">
    <location>
        <begin position="1"/>
        <end position="457"/>
    </location>
</feature>
<feature type="DNA-binding region" evidence="1">
    <location>
        <begin position="147"/>
        <end position="237"/>
    </location>
</feature>
<feature type="region of interest" description="Disordered" evidence="2">
    <location>
        <begin position="80"/>
        <end position="171"/>
    </location>
</feature>
<feature type="region of interest" description="Cyclin A/CDK2 binding" evidence="1">
    <location>
        <begin position="96"/>
        <end position="145"/>
    </location>
</feature>
<feature type="region of interest" description="Leucine-zipper">
    <location>
        <begin position="196"/>
        <end position="217"/>
    </location>
</feature>
<feature type="region of interest" description="Dimerization" evidence="1">
    <location>
        <begin position="238"/>
        <end position="329"/>
    </location>
</feature>
<feature type="region of interest" description="Disordered" evidence="2">
    <location>
        <begin position="350"/>
        <end position="387"/>
    </location>
</feature>
<feature type="region of interest" description="Transactivation" evidence="1">
    <location>
        <begin position="383"/>
        <end position="457"/>
    </location>
</feature>
<feature type="region of interest" description="Retinoblastoma protein binding" evidence="1">
    <location>
        <begin position="424"/>
        <end position="441"/>
    </location>
</feature>
<feature type="short sequence motif" description="DEF box">
    <location>
        <begin position="201"/>
        <end position="237"/>
    </location>
</feature>
<feature type="compositionally biased region" description="Polar residues" evidence="2">
    <location>
        <begin position="93"/>
        <end position="102"/>
    </location>
</feature>
<feature type="compositionally biased region" description="Low complexity" evidence="2">
    <location>
        <begin position="155"/>
        <end position="164"/>
    </location>
</feature>
<feature type="compositionally biased region" description="Polar residues" evidence="2">
    <location>
        <begin position="371"/>
        <end position="387"/>
    </location>
</feature>
<feature type="sequence conflict" description="In Ref. 2; AAB71671." evidence="6" ref="2">
    <original>SSRVGLLQ</original>
    <variation>CSSPTLLE</variation>
    <location>
        <begin position="102"/>
        <end position="109"/>
    </location>
</feature>
<feature type="sequence conflict" description="In Ref. 2; AAB71671." evidence="6" ref="2">
    <original>V</original>
    <variation>L</variation>
    <location>
        <position position="309"/>
    </location>
</feature>
<reference key="1">
    <citation type="journal article" date="2009" name="PLoS Biol.">
        <title>Lineage-specific biology revealed by a finished genome assembly of the mouse.</title>
        <authorList>
            <person name="Church D.M."/>
            <person name="Goodstadt L."/>
            <person name="Hillier L.W."/>
            <person name="Zody M.C."/>
            <person name="Goldstein S."/>
            <person name="She X."/>
            <person name="Bult C.J."/>
            <person name="Agarwala R."/>
            <person name="Cherry J.L."/>
            <person name="DiCuccio M."/>
            <person name="Hlavina W."/>
            <person name="Kapustin Y."/>
            <person name="Meric P."/>
            <person name="Maglott D."/>
            <person name="Birtle Z."/>
            <person name="Marques A.C."/>
            <person name="Graves T."/>
            <person name="Zhou S."/>
            <person name="Teague B."/>
            <person name="Potamousis K."/>
            <person name="Churas C."/>
            <person name="Place M."/>
            <person name="Herschleb J."/>
            <person name="Runnheim R."/>
            <person name="Forrest D."/>
            <person name="Amos-Landgraf J."/>
            <person name="Schwartz D.C."/>
            <person name="Cheng Z."/>
            <person name="Lindblad-Toh K."/>
            <person name="Eichler E.E."/>
            <person name="Ponting C.P."/>
        </authorList>
    </citation>
    <scope>NUCLEOTIDE SEQUENCE [LARGE SCALE GENOMIC DNA]</scope>
    <source>
        <strain>C57BL/6J</strain>
    </source>
</reference>
<reference key="2">
    <citation type="journal article" date="1997" name="Mech. Dev.">
        <title>Expression patterns of the E2F family of transcription factors during mouse nervous system development.</title>
        <authorList>
            <person name="Dagnino L."/>
            <person name="Fry C.J."/>
            <person name="Bartley S.M."/>
            <person name="Farnham P."/>
            <person name="Gallie B.L."/>
            <person name="Phillips R.A."/>
        </authorList>
    </citation>
    <scope>NUCLEOTIDE SEQUENCE [MRNA] OF 102-457</scope>
    <source>
        <strain>Swiss albino</strain>
        <tissue>Fibroblast</tissue>
    </source>
</reference>
<reference key="3">
    <citation type="journal article" date="1997" name="Cell Growth Differ.">
        <title>Expression patterns of the E2F family of transcription factors during murine epithelial development.</title>
        <authorList>
            <person name="Dagnino L."/>
            <person name="Fry C.J."/>
            <person name="Bartley S.M."/>
            <person name="Farnham P."/>
            <person name="Gallie B.L."/>
            <person name="Phillips R.A."/>
        </authorList>
    </citation>
    <scope>DEVELOPMENTAL STAGE</scope>
</reference>
<reference key="4">
    <citation type="journal article" date="2005" name="Mol. Biol. Cell">
        <title>EAPP, a novel E2F binding protein that modulates E2F-dependent transcription.</title>
        <authorList>
            <person name="Novy M."/>
            <person name="Pohn R."/>
            <person name="Andorfer P."/>
            <person name="Novy-Weiland T."/>
            <person name="Galos B."/>
            <person name="Schwarzmayr L."/>
            <person name="Rotheneder H."/>
        </authorList>
    </citation>
    <scope>INTERACTION WITH EAPP</scope>
</reference>
<reference key="5">
    <citation type="journal article" date="2010" name="Mol. Cell. Biol.">
        <title>Repression of transcriptional activity of C/EBPalpha by E2F-dimerization partner complexes.</title>
        <authorList>
            <person name="Zaragoza K."/>
            <person name="Begay V."/>
            <person name="Schuetz A."/>
            <person name="Heinemann U."/>
            <person name="Leutz A."/>
        </authorList>
    </citation>
    <scope>FUNCTION</scope>
</reference>
<accession>O35261</accession>
<accession>Q5T0I6</accession>
<gene>
    <name type="primary">E2f3</name>
</gene>
<keyword id="KW-0010">Activator</keyword>
<keyword id="KW-0131">Cell cycle</keyword>
<keyword id="KW-0238">DNA-binding</keyword>
<keyword id="KW-0539">Nucleus</keyword>
<keyword id="KW-1185">Reference proteome</keyword>
<keyword id="KW-0804">Transcription</keyword>
<keyword id="KW-0805">Transcription regulation</keyword>
<comment type="function">
    <text evidence="4">Transcription activator that binds DNA cooperatively with DP proteins through the E2 recognition site, 5'-TTTC[CG]CGC-3' found in the promoter region of a number of genes whose products are involved in cell cycle regulation or in DNA replication. The DRTF1/E2F complex functions in the control of cell-cycle progression from G1 to S phase. E2F3 binds specifically to RB1 in a cell-cycle dependent manner. Inhibits adipogenesis, probably through the repression of CEBPA binding to its target gene promoters (PubMed:20176812).</text>
</comment>
<comment type="subunit">
    <text evidence="3">Component of the DRTF1/E2F transcription factor complex. Binds cooperatively with TFDP1/Dp-1 to E2F sites. Interacts with retinoblastoma protein RB1 and related proteins (such as RBL1) that inhibit the E2F transactivation domain. Binds EAPP.</text>
</comment>
<comment type="subcellular location">
    <subcellularLocation>
        <location>Nucleus</location>
    </subcellularLocation>
</comment>
<comment type="developmental stage">
    <text evidence="5">In the developing nervous system, high levels expressed in both ventral and dorsal regions of the spinal cord from 13.5 dpc. Also expressed in dorsal root and cranial ganglia in 11.5-18.5 dpc embryos. Only low levels of expression in developing brain. In the developing retina (15.5 dpc), expression of E2F3 is localized to the ganglion cell layer. In other developing tissues, expressed in liver, lung and heart. Weak expression in developing kidney and skeletal muscle. Absent from the developing choroid plexus, thymus and developing skin. Low levels of expression in the developing intestinal epithelium and mesenchyme in 12.5-18.5 dpc embryos.</text>
</comment>
<comment type="similarity">
    <text evidence="6">Belongs to the E2F/DP family.</text>
</comment>
<dbReference type="EMBL" id="AL513025">
    <property type="protein sequence ID" value="CAI24679.1"/>
    <property type="molecule type" value="Genomic_DNA"/>
</dbReference>
<dbReference type="EMBL" id="AF015948">
    <property type="protein sequence ID" value="AAB71671.1"/>
    <property type="molecule type" value="mRNA"/>
</dbReference>
<dbReference type="CCDS" id="CCDS26413.1"/>
<dbReference type="RefSeq" id="NP_034223.1">
    <property type="nucleotide sequence ID" value="NM_010093.3"/>
</dbReference>
<dbReference type="SMR" id="O35261"/>
<dbReference type="BioGRID" id="199351">
    <property type="interactions" value="2"/>
</dbReference>
<dbReference type="CORUM" id="O35261"/>
<dbReference type="DIP" id="DIP-59314N"/>
<dbReference type="FunCoup" id="O35261">
    <property type="interactions" value="3840"/>
</dbReference>
<dbReference type="IntAct" id="O35261">
    <property type="interactions" value="1"/>
</dbReference>
<dbReference type="STRING" id="10090.ENSMUSP00000100012"/>
<dbReference type="iPTMnet" id="O35261"/>
<dbReference type="PhosphoSitePlus" id="O35261"/>
<dbReference type="PaxDb" id="10090-ENSMUSP00000100012"/>
<dbReference type="PeptideAtlas" id="O35261"/>
<dbReference type="Antibodypedia" id="10438">
    <property type="antibodies" value="349 antibodies from 36 providers"/>
</dbReference>
<dbReference type="DNASU" id="13557"/>
<dbReference type="Ensembl" id="ENSMUST00000102948.11">
    <property type="protein sequence ID" value="ENSMUSP00000100012.4"/>
    <property type="gene ID" value="ENSMUSG00000016477.19"/>
</dbReference>
<dbReference type="GeneID" id="13557"/>
<dbReference type="KEGG" id="mmu:13557"/>
<dbReference type="UCSC" id="uc007pyq.2">
    <property type="organism name" value="mouse"/>
</dbReference>
<dbReference type="AGR" id="MGI:1096340"/>
<dbReference type="CTD" id="1871"/>
<dbReference type="MGI" id="MGI:1096340">
    <property type="gene designation" value="E2f3"/>
</dbReference>
<dbReference type="VEuPathDB" id="HostDB:ENSMUSG00000016477"/>
<dbReference type="eggNOG" id="KOG2577">
    <property type="taxonomic scope" value="Eukaryota"/>
</dbReference>
<dbReference type="GeneTree" id="ENSGT00940000155115"/>
<dbReference type="HOGENOM" id="CLU_032091_0_0_1"/>
<dbReference type="InParanoid" id="O35261"/>
<dbReference type="OrthoDB" id="1743261at2759"/>
<dbReference type="PhylomeDB" id="O35261"/>
<dbReference type="TreeFam" id="TF105566"/>
<dbReference type="Reactome" id="R-MMU-68911">
    <property type="pathway name" value="G2 Phase"/>
</dbReference>
<dbReference type="Reactome" id="R-MMU-69231">
    <property type="pathway name" value="Cyclin D associated events in G1"/>
</dbReference>
<dbReference type="BioGRID-ORCS" id="13557">
    <property type="hits" value="4 hits in 78 CRISPR screens"/>
</dbReference>
<dbReference type="ChiTaRS" id="E2f3">
    <property type="organism name" value="mouse"/>
</dbReference>
<dbReference type="PRO" id="PR:O35261"/>
<dbReference type="Proteomes" id="UP000000589">
    <property type="component" value="Chromosome 13"/>
</dbReference>
<dbReference type="RNAct" id="O35261">
    <property type="molecule type" value="protein"/>
</dbReference>
<dbReference type="Bgee" id="ENSMUSG00000016477">
    <property type="expression patterns" value="Expressed in floor plate of midbrain and 224 other cell types or tissues"/>
</dbReference>
<dbReference type="ExpressionAtlas" id="O35261">
    <property type="expression patterns" value="baseline and differential"/>
</dbReference>
<dbReference type="GO" id="GO:0005829">
    <property type="term" value="C:cytosol"/>
    <property type="evidence" value="ECO:0007669"/>
    <property type="project" value="Ensembl"/>
</dbReference>
<dbReference type="GO" id="GO:0005654">
    <property type="term" value="C:nucleoplasm"/>
    <property type="evidence" value="ECO:0007669"/>
    <property type="project" value="Ensembl"/>
</dbReference>
<dbReference type="GO" id="GO:0090575">
    <property type="term" value="C:RNA polymerase II transcription regulator complex"/>
    <property type="evidence" value="ECO:0007669"/>
    <property type="project" value="Ensembl"/>
</dbReference>
<dbReference type="GO" id="GO:0003677">
    <property type="term" value="F:DNA binding"/>
    <property type="evidence" value="ECO:0000314"/>
    <property type="project" value="MGI"/>
</dbReference>
<dbReference type="GO" id="GO:0001228">
    <property type="term" value="F:DNA-binding transcription activator activity, RNA polymerase II-specific"/>
    <property type="evidence" value="ECO:0007669"/>
    <property type="project" value="Ensembl"/>
</dbReference>
<dbReference type="GO" id="GO:0003700">
    <property type="term" value="F:DNA-binding transcription factor activity"/>
    <property type="evidence" value="ECO:0000314"/>
    <property type="project" value="MGI"/>
</dbReference>
<dbReference type="GO" id="GO:0046983">
    <property type="term" value="F:protein dimerization activity"/>
    <property type="evidence" value="ECO:0007669"/>
    <property type="project" value="InterPro"/>
</dbReference>
<dbReference type="GO" id="GO:0000978">
    <property type="term" value="F:RNA polymerase II cis-regulatory region sequence-specific DNA binding"/>
    <property type="evidence" value="ECO:0007669"/>
    <property type="project" value="InterPro"/>
</dbReference>
<dbReference type="GO" id="GO:0000082">
    <property type="term" value="P:G1/S transition of mitotic cell cycle"/>
    <property type="evidence" value="ECO:0007669"/>
    <property type="project" value="Ensembl"/>
</dbReference>
<dbReference type="GO" id="GO:0070345">
    <property type="term" value="P:negative regulation of fat cell proliferation"/>
    <property type="evidence" value="ECO:0000315"/>
    <property type="project" value="UniProtKB"/>
</dbReference>
<dbReference type="GO" id="GO:0008284">
    <property type="term" value="P:positive regulation of cell population proliferation"/>
    <property type="evidence" value="ECO:0000314"/>
    <property type="project" value="MGI"/>
</dbReference>
<dbReference type="GO" id="GO:0045893">
    <property type="term" value="P:positive regulation of DNA-templated transcription"/>
    <property type="evidence" value="ECO:0000314"/>
    <property type="project" value="MGI"/>
</dbReference>
<dbReference type="GO" id="GO:1905461">
    <property type="term" value="P:positive regulation of vascular associated smooth muscle cell apoptotic process"/>
    <property type="evidence" value="ECO:0007669"/>
    <property type="project" value="Ensembl"/>
</dbReference>
<dbReference type="GO" id="GO:0006606">
    <property type="term" value="P:protein import into nucleus"/>
    <property type="evidence" value="ECO:0007669"/>
    <property type="project" value="Ensembl"/>
</dbReference>
<dbReference type="GO" id="GO:0006355">
    <property type="term" value="P:regulation of DNA-templated transcription"/>
    <property type="evidence" value="ECO:0000314"/>
    <property type="project" value="MGI"/>
</dbReference>
<dbReference type="CDD" id="cd14660">
    <property type="entry name" value="E2F_DD"/>
    <property type="match status" value="1"/>
</dbReference>
<dbReference type="FunFam" id="1.10.10.10:FF:000008">
    <property type="entry name" value="E2F transcription factor 1"/>
    <property type="match status" value="1"/>
</dbReference>
<dbReference type="Gene3D" id="6.10.250.540">
    <property type="match status" value="1"/>
</dbReference>
<dbReference type="Gene3D" id="1.10.10.10">
    <property type="entry name" value="Winged helix-like DNA-binding domain superfamily/Winged helix DNA-binding domain"/>
    <property type="match status" value="1"/>
</dbReference>
<dbReference type="InterPro" id="IPR015633">
    <property type="entry name" value="E2F"/>
</dbReference>
<dbReference type="InterPro" id="IPR037241">
    <property type="entry name" value="E2F-DP_heterodim"/>
</dbReference>
<dbReference type="InterPro" id="IPR032198">
    <property type="entry name" value="E2F_CC-MB"/>
</dbReference>
<dbReference type="InterPro" id="IPR003316">
    <property type="entry name" value="E2F_WHTH_DNA-bd_dom"/>
</dbReference>
<dbReference type="InterPro" id="IPR036388">
    <property type="entry name" value="WH-like_DNA-bd_sf"/>
</dbReference>
<dbReference type="InterPro" id="IPR036390">
    <property type="entry name" value="WH_DNA-bd_sf"/>
</dbReference>
<dbReference type="PANTHER" id="PTHR12081">
    <property type="entry name" value="TRANSCRIPTION FACTOR E2F"/>
    <property type="match status" value="1"/>
</dbReference>
<dbReference type="PANTHER" id="PTHR12081:SF44">
    <property type="entry name" value="TRANSCRIPTION FACTOR E2F3"/>
    <property type="match status" value="1"/>
</dbReference>
<dbReference type="Pfam" id="PF16421">
    <property type="entry name" value="E2F_CC-MB"/>
    <property type="match status" value="1"/>
</dbReference>
<dbReference type="Pfam" id="PF02319">
    <property type="entry name" value="E2F_TDP"/>
    <property type="match status" value="1"/>
</dbReference>
<dbReference type="SMART" id="SM01372">
    <property type="entry name" value="E2F_TDP"/>
    <property type="match status" value="1"/>
</dbReference>
<dbReference type="SUPFAM" id="SSF144074">
    <property type="entry name" value="E2F-DP heterodimerization region"/>
    <property type="match status" value="1"/>
</dbReference>
<dbReference type="SUPFAM" id="SSF46785">
    <property type="entry name" value="Winged helix' DNA-binding domain"/>
    <property type="match status" value="1"/>
</dbReference>
<sequence length="457" mass="48757">MRKGIQPALEQYLVTAGGGEGAAVVAAAAAASMDKRALLASPGFAAAAAPGTYIQILTTNPSTTSCATSLQSGALTAGPLLPSVPGTEPAASSLYTTPQGPSSRVGLLQQPPAPGRGGGGGPPAKRRLELGESGHQYLSDGLKTPKGKGRAALRSPDSPKTPKSPSEKTRYDTSLGLLTKKFIQLLSQSPDGVLDLNKAAEVLKVQKRRIYDITNVLEGIHLIKKKSKNNVQWMGCSLSEDGGMLAQCQGLSKEVTELSQEEKKLDELIQSCTLDLKLLTEDSENQRLAYVTYQDIRKISGLKDQTVIVVKAPPETRLEVPDSIESLQIHLASTQGPIEVYLCPEETETHRPMKTNNQDHNGNIPKPTSKDLASNNSGHSDCSVSTANLSPLASPANLLQQTEDQIPSNLEGPFVNLLPPLLQEDYLLSLGEEEGISDLFDAYDLEKLPLVEDFMCS</sequence>
<protein>
    <recommendedName>
        <fullName>Transcription factor E2F3</fullName>
        <shortName>E2F-3</shortName>
    </recommendedName>
</protein>